<name>RSMG_BART1</name>
<reference key="1">
    <citation type="journal article" date="2007" name="Nat. Genet.">
        <title>Genomic analysis of Bartonella identifies type IV secretion systems as host adaptability factors.</title>
        <authorList>
            <person name="Saenz H.L."/>
            <person name="Engel P."/>
            <person name="Stoeckli M.C."/>
            <person name="Lanz C."/>
            <person name="Raddatz G."/>
            <person name="Vayssier-Taussat M."/>
            <person name="Birtles R."/>
            <person name="Schuster S.C."/>
            <person name="Dehio C."/>
        </authorList>
    </citation>
    <scope>NUCLEOTIDE SEQUENCE [LARGE SCALE GENOMIC DNA]</scope>
    <source>
        <strain>CIP 105476 / IBS 506</strain>
    </source>
</reference>
<organism>
    <name type="scientific">Bartonella tribocorum (strain CIP 105476 / IBS 506)</name>
    <dbReference type="NCBI Taxonomy" id="382640"/>
    <lineage>
        <taxon>Bacteria</taxon>
        <taxon>Pseudomonadati</taxon>
        <taxon>Pseudomonadota</taxon>
        <taxon>Alphaproteobacteria</taxon>
        <taxon>Hyphomicrobiales</taxon>
        <taxon>Bartonellaceae</taxon>
        <taxon>Bartonella</taxon>
    </lineage>
</organism>
<dbReference type="EC" id="2.1.1.170" evidence="1"/>
<dbReference type="EMBL" id="AM260525">
    <property type="protein sequence ID" value="CAK02638.1"/>
    <property type="molecule type" value="Genomic_DNA"/>
</dbReference>
<dbReference type="RefSeq" id="WP_012232631.1">
    <property type="nucleotide sequence ID" value="NC_010161.1"/>
</dbReference>
<dbReference type="SMR" id="A9IZX8"/>
<dbReference type="KEGG" id="btr:BT_2691"/>
<dbReference type="eggNOG" id="COG0357">
    <property type="taxonomic scope" value="Bacteria"/>
</dbReference>
<dbReference type="HOGENOM" id="CLU_065341_1_1_5"/>
<dbReference type="Proteomes" id="UP000001592">
    <property type="component" value="Chromosome"/>
</dbReference>
<dbReference type="GO" id="GO:0005829">
    <property type="term" value="C:cytosol"/>
    <property type="evidence" value="ECO:0007669"/>
    <property type="project" value="TreeGrafter"/>
</dbReference>
<dbReference type="GO" id="GO:0070043">
    <property type="term" value="F:rRNA (guanine-N7-)-methyltransferase activity"/>
    <property type="evidence" value="ECO:0007669"/>
    <property type="project" value="UniProtKB-UniRule"/>
</dbReference>
<dbReference type="Gene3D" id="3.40.50.150">
    <property type="entry name" value="Vaccinia Virus protein VP39"/>
    <property type="match status" value="1"/>
</dbReference>
<dbReference type="HAMAP" id="MF_00074">
    <property type="entry name" value="16SrRNA_methyltr_G"/>
    <property type="match status" value="1"/>
</dbReference>
<dbReference type="InterPro" id="IPR003682">
    <property type="entry name" value="rRNA_ssu_MeTfrase_G"/>
</dbReference>
<dbReference type="InterPro" id="IPR029063">
    <property type="entry name" value="SAM-dependent_MTases_sf"/>
</dbReference>
<dbReference type="NCBIfam" id="TIGR00138">
    <property type="entry name" value="rsmG_gidB"/>
    <property type="match status" value="1"/>
</dbReference>
<dbReference type="PANTHER" id="PTHR31760">
    <property type="entry name" value="S-ADENOSYL-L-METHIONINE-DEPENDENT METHYLTRANSFERASES SUPERFAMILY PROTEIN"/>
    <property type="match status" value="1"/>
</dbReference>
<dbReference type="PANTHER" id="PTHR31760:SF0">
    <property type="entry name" value="S-ADENOSYL-L-METHIONINE-DEPENDENT METHYLTRANSFERASES SUPERFAMILY PROTEIN"/>
    <property type="match status" value="1"/>
</dbReference>
<dbReference type="Pfam" id="PF02527">
    <property type="entry name" value="GidB"/>
    <property type="match status" value="1"/>
</dbReference>
<dbReference type="PIRSF" id="PIRSF003078">
    <property type="entry name" value="GidB"/>
    <property type="match status" value="1"/>
</dbReference>
<dbReference type="SUPFAM" id="SSF53335">
    <property type="entry name" value="S-adenosyl-L-methionine-dependent methyltransferases"/>
    <property type="match status" value="1"/>
</dbReference>
<evidence type="ECO:0000255" key="1">
    <source>
        <dbReference type="HAMAP-Rule" id="MF_00074"/>
    </source>
</evidence>
<proteinExistence type="inferred from homology"/>
<sequence length="213" mass="24037">MDSSIEQKYKQLLDIVPSVSRETMENLIQFESLILQWNAHINLISAATIPDLWTRHILDSAQIFPLCSHSLQWCDLGSGGGFPAIVIAIFLKEKRSGHINLVESNGKKVAFLRTVIAQLNLPATVYHARIEDIYQKIPISDIITARGLAPLNELLQLIFPLLTEKTIALLQKGRDYATEVKNASANWHFDLLKHTSKIDENSVILEISHIRSY</sequence>
<gene>
    <name evidence="1" type="primary">rsmG</name>
    <name type="ordered locus">BT_2691</name>
</gene>
<feature type="chain" id="PRO_1000075214" description="Ribosomal RNA small subunit methyltransferase G">
    <location>
        <begin position="1"/>
        <end position="213"/>
    </location>
</feature>
<feature type="binding site" evidence="1">
    <location>
        <position position="77"/>
    </location>
    <ligand>
        <name>S-adenosyl-L-methionine</name>
        <dbReference type="ChEBI" id="CHEBI:59789"/>
    </ligand>
</feature>
<feature type="binding site" evidence="1">
    <location>
        <position position="82"/>
    </location>
    <ligand>
        <name>S-adenosyl-L-methionine</name>
        <dbReference type="ChEBI" id="CHEBI:59789"/>
    </ligand>
</feature>
<feature type="binding site" evidence="1">
    <location>
        <begin position="130"/>
        <end position="131"/>
    </location>
    <ligand>
        <name>S-adenosyl-L-methionine</name>
        <dbReference type="ChEBI" id="CHEBI:59789"/>
    </ligand>
</feature>
<feature type="binding site" evidence="1">
    <location>
        <position position="146"/>
    </location>
    <ligand>
        <name>S-adenosyl-L-methionine</name>
        <dbReference type="ChEBI" id="CHEBI:59789"/>
    </ligand>
</feature>
<comment type="function">
    <text evidence="1">Specifically methylates the N7 position of guanine in position 527 of 16S rRNA.</text>
</comment>
<comment type="catalytic activity">
    <reaction evidence="1">
        <text>guanosine(527) in 16S rRNA + S-adenosyl-L-methionine = N(7)-methylguanosine(527) in 16S rRNA + S-adenosyl-L-homocysteine</text>
        <dbReference type="Rhea" id="RHEA:42732"/>
        <dbReference type="Rhea" id="RHEA-COMP:10209"/>
        <dbReference type="Rhea" id="RHEA-COMP:10210"/>
        <dbReference type="ChEBI" id="CHEBI:57856"/>
        <dbReference type="ChEBI" id="CHEBI:59789"/>
        <dbReference type="ChEBI" id="CHEBI:74269"/>
        <dbReference type="ChEBI" id="CHEBI:74480"/>
        <dbReference type="EC" id="2.1.1.170"/>
    </reaction>
</comment>
<comment type="subcellular location">
    <subcellularLocation>
        <location evidence="1">Cytoplasm</location>
    </subcellularLocation>
</comment>
<comment type="similarity">
    <text evidence="1">Belongs to the methyltransferase superfamily. RNA methyltransferase RsmG family.</text>
</comment>
<protein>
    <recommendedName>
        <fullName evidence="1">Ribosomal RNA small subunit methyltransferase G</fullName>
        <ecNumber evidence="1">2.1.1.170</ecNumber>
    </recommendedName>
    <alternativeName>
        <fullName evidence="1">16S rRNA 7-methylguanosine methyltransferase</fullName>
        <shortName evidence="1">16S rRNA m7G methyltransferase</shortName>
    </alternativeName>
</protein>
<accession>A9IZX8</accession>
<keyword id="KW-0963">Cytoplasm</keyword>
<keyword id="KW-0489">Methyltransferase</keyword>
<keyword id="KW-0698">rRNA processing</keyword>
<keyword id="KW-0949">S-adenosyl-L-methionine</keyword>
<keyword id="KW-0808">Transferase</keyword>